<reference key="1">
    <citation type="journal article" date="2006" name="J. Bacteriol.">
        <title>Living with genome instability: the adaptation of phytoplasmas to diverse environments of their insect and plant hosts.</title>
        <authorList>
            <person name="Bai X."/>
            <person name="Zhang J."/>
            <person name="Ewing A."/>
            <person name="Miller S.A."/>
            <person name="Jancso Radek A."/>
            <person name="Shevchenko D.V."/>
            <person name="Tsukerman K."/>
            <person name="Walunas T."/>
            <person name="Lapidus A."/>
            <person name="Campbell J.W."/>
            <person name="Hogenhout S.A."/>
        </authorList>
    </citation>
    <scope>NUCLEOTIDE SEQUENCE [LARGE SCALE GENOMIC DNA]</scope>
    <source>
        <strain>AYWB</strain>
    </source>
</reference>
<gene>
    <name evidence="1" type="primary">acpP</name>
    <name type="ordered locus">AYWB_657</name>
</gene>
<evidence type="ECO:0000255" key="1">
    <source>
        <dbReference type="HAMAP-Rule" id="MF_01217"/>
    </source>
</evidence>
<evidence type="ECO:0000255" key="2">
    <source>
        <dbReference type="PROSITE-ProRule" id="PRU00258"/>
    </source>
</evidence>
<name>ACP_AYWBP</name>
<proteinExistence type="inferred from homology"/>
<accession>Q2NIG9</accession>
<comment type="function">
    <text evidence="1">Carrier of the growing fatty acid chain in fatty acid biosynthesis.</text>
</comment>
<comment type="pathway">
    <text evidence="1">Lipid metabolism; fatty acid biosynthesis.</text>
</comment>
<comment type="subcellular location">
    <subcellularLocation>
        <location evidence="1">Cytoplasm</location>
    </subcellularLocation>
</comment>
<comment type="PTM">
    <text evidence="1">4'-phosphopantetheine is transferred from CoA to a specific serine of apo-ACP by AcpS. This modification is essential for activity because fatty acids are bound in thioester linkage to the sulfhydryl of the prosthetic group.</text>
</comment>
<comment type="similarity">
    <text evidence="1">Belongs to the acyl carrier protein (ACP) family.</text>
</comment>
<sequence length="76" mass="8648">MIFEKIKDLIATQLSLDTSTITLDTRFKEDLGLDSLDALELVMEAEKTFQINISDATLQNFKTVQDIVFYITKNTS</sequence>
<dbReference type="EMBL" id="CP000061">
    <property type="protein sequence ID" value="ABC65774.1"/>
    <property type="molecule type" value="Genomic_DNA"/>
</dbReference>
<dbReference type="RefSeq" id="WP_011412935.1">
    <property type="nucleotide sequence ID" value="NC_007716.1"/>
</dbReference>
<dbReference type="SMR" id="Q2NIG9"/>
<dbReference type="STRING" id="322098.AYWB_657"/>
<dbReference type="KEGG" id="ayw:AYWB_657"/>
<dbReference type="eggNOG" id="COG0236">
    <property type="taxonomic scope" value="Bacteria"/>
</dbReference>
<dbReference type="HOGENOM" id="CLU_108696_5_2_14"/>
<dbReference type="OrthoDB" id="9804551at2"/>
<dbReference type="PhylomeDB" id="Q2NIG9"/>
<dbReference type="UniPathway" id="UPA00094"/>
<dbReference type="Proteomes" id="UP000001934">
    <property type="component" value="Chromosome"/>
</dbReference>
<dbReference type="GO" id="GO:0005829">
    <property type="term" value="C:cytosol"/>
    <property type="evidence" value="ECO:0007669"/>
    <property type="project" value="TreeGrafter"/>
</dbReference>
<dbReference type="GO" id="GO:0016020">
    <property type="term" value="C:membrane"/>
    <property type="evidence" value="ECO:0007669"/>
    <property type="project" value="GOC"/>
</dbReference>
<dbReference type="GO" id="GO:0000035">
    <property type="term" value="F:acyl binding"/>
    <property type="evidence" value="ECO:0007669"/>
    <property type="project" value="TreeGrafter"/>
</dbReference>
<dbReference type="GO" id="GO:0000036">
    <property type="term" value="F:acyl carrier activity"/>
    <property type="evidence" value="ECO:0007669"/>
    <property type="project" value="UniProtKB-UniRule"/>
</dbReference>
<dbReference type="GO" id="GO:0009245">
    <property type="term" value="P:lipid A biosynthetic process"/>
    <property type="evidence" value="ECO:0007669"/>
    <property type="project" value="TreeGrafter"/>
</dbReference>
<dbReference type="Gene3D" id="1.10.1200.10">
    <property type="entry name" value="ACP-like"/>
    <property type="match status" value="1"/>
</dbReference>
<dbReference type="HAMAP" id="MF_01217">
    <property type="entry name" value="Acyl_carrier"/>
    <property type="match status" value="1"/>
</dbReference>
<dbReference type="InterPro" id="IPR003231">
    <property type="entry name" value="ACP"/>
</dbReference>
<dbReference type="InterPro" id="IPR036736">
    <property type="entry name" value="ACP-like_sf"/>
</dbReference>
<dbReference type="InterPro" id="IPR009081">
    <property type="entry name" value="PP-bd_ACP"/>
</dbReference>
<dbReference type="InterPro" id="IPR006162">
    <property type="entry name" value="Ppantetheine_attach_site"/>
</dbReference>
<dbReference type="NCBIfam" id="TIGR00517">
    <property type="entry name" value="acyl_carrier"/>
    <property type="match status" value="1"/>
</dbReference>
<dbReference type="NCBIfam" id="NF002148">
    <property type="entry name" value="PRK00982.1-2"/>
    <property type="match status" value="1"/>
</dbReference>
<dbReference type="NCBIfam" id="NF002150">
    <property type="entry name" value="PRK00982.1-4"/>
    <property type="match status" value="1"/>
</dbReference>
<dbReference type="PANTHER" id="PTHR20863">
    <property type="entry name" value="ACYL CARRIER PROTEIN"/>
    <property type="match status" value="1"/>
</dbReference>
<dbReference type="PANTHER" id="PTHR20863:SF76">
    <property type="entry name" value="CARRIER DOMAIN-CONTAINING PROTEIN"/>
    <property type="match status" value="1"/>
</dbReference>
<dbReference type="Pfam" id="PF00550">
    <property type="entry name" value="PP-binding"/>
    <property type="match status" value="1"/>
</dbReference>
<dbReference type="SUPFAM" id="SSF47336">
    <property type="entry name" value="ACP-like"/>
    <property type="match status" value="1"/>
</dbReference>
<dbReference type="PROSITE" id="PS50075">
    <property type="entry name" value="CARRIER"/>
    <property type="match status" value="1"/>
</dbReference>
<dbReference type="PROSITE" id="PS00012">
    <property type="entry name" value="PHOSPHOPANTETHEINE"/>
    <property type="match status" value="1"/>
</dbReference>
<feature type="chain" id="PRO_1000066551" description="Acyl carrier protein">
    <location>
        <begin position="1"/>
        <end position="76"/>
    </location>
</feature>
<feature type="domain" description="Carrier" evidence="2">
    <location>
        <begin position="1"/>
        <end position="75"/>
    </location>
</feature>
<feature type="modified residue" description="O-(pantetheine 4'-phosphoryl)serine" evidence="2">
    <location>
        <position position="35"/>
    </location>
</feature>
<keyword id="KW-0963">Cytoplasm</keyword>
<keyword id="KW-0275">Fatty acid biosynthesis</keyword>
<keyword id="KW-0276">Fatty acid metabolism</keyword>
<keyword id="KW-0444">Lipid biosynthesis</keyword>
<keyword id="KW-0443">Lipid metabolism</keyword>
<keyword id="KW-0596">Phosphopantetheine</keyword>
<keyword id="KW-0597">Phosphoprotein</keyword>
<protein>
    <recommendedName>
        <fullName evidence="1">Acyl carrier protein</fullName>
        <shortName evidence="1">ACP</shortName>
    </recommendedName>
</protein>
<organism>
    <name type="scientific">Aster yellows witches'-broom phytoplasma (strain AYWB)</name>
    <dbReference type="NCBI Taxonomy" id="322098"/>
    <lineage>
        <taxon>Bacteria</taxon>
        <taxon>Bacillati</taxon>
        <taxon>Mycoplasmatota</taxon>
        <taxon>Mollicutes</taxon>
        <taxon>Acholeplasmatales</taxon>
        <taxon>Acholeplasmataceae</taxon>
        <taxon>Candidatus Phytoplasma</taxon>
        <taxon>16SrI (Aster yellows group)</taxon>
    </lineage>
</organism>